<gene>
    <name type="primary">cmss1</name>
</gene>
<dbReference type="EMBL" id="BC080095">
    <property type="protein sequence ID" value="AAH80095.1"/>
    <property type="molecule type" value="mRNA"/>
</dbReference>
<dbReference type="RefSeq" id="NP_001087551.1">
    <property type="nucleotide sequence ID" value="NM_001094082.1"/>
</dbReference>
<dbReference type="SMR" id="Q68EV5"/>
<dbReference type="DNASU" id="447375"/>
<dbReference type="GeneID" id="447375"/>
<dbReference type="KEGG" id="xla:447375"/>
<dbReference type="AGR" id="Xenbase:XB-GENE-958025"/>
<dbReference type="CTD" id="447375"/>
<dbReference type="Xenbase" id="XB-GENE-958025">
    <property type="gene designation" value="cmss1.L"/>
</dbReference>
<dbReference type="OrthoDB" id="1929311at2759"/>
<dbReference type="Proteomes" id="UP000186698">
    <property type="component" value="Chromosome 2L"/>
</dbReference>
<dbReference type="Bgee" id="447375">
    <property type="expression patterns" value="Expressed in muscle tissue and 19 other cell types or tissues"/>
</dbReference>
<dbReference type="GO" id="GO:0030686">
    <property type="term" value="C:90S preribosome"/>
    <property type="evidence" value="ECO:0007669"/>
    <property type="project" value="TreeGrafter"/>
</dbReference>
<dbReference type="GO" id="GO:0005634">
    <property type="term" value="C:nucleus"/>
    <property type="evidence" value="ECO:0007669"/>
    <property type="project" value="TreeGrafter"/>
</dbReference>
<dbReference type="Gene3D" id="3.40.50.300">
    <property type="entry name" value="P-loop containing nucleotide triphosphate hydrolases"/>
    <property type="match status" value="1"/>
</dbReference>
<dbReference type="InterPro" id="IPR032704">
    <property type="entry name" value="Cms1"/>
</dbReference>
<dbReference type="InterPro" id="IPR027417">
    <property type="entry name" value="P-loop_NTPase"/>
</dbReference>
<dbReference type="PANTHER" id="PTHR24030">
    <property type="entry name" value="PROTEIN CMSS1"/>
    <property type="match status" value="1"/>
</dbReference>
<dbReference type="PANTHER" id="PTHR24030:SF0">
    <property type="entry name" value="PROTEIN CMSS1"/>
    <property type="match status" value="1"/>
</dbReference>
<dbReference type="Pfam" id="PF14617">
    <property type="entry name" value="CMS1"/>
    <property type="match status" value="1"/>
</dbReference>
<dbReference type="SUPFAM" id="SSF52540">
    <property type="entry name" value="P-loop containing nucleoside triphosphate hydrolases"/>
    <property type="match status" value="1"/>
</dbReference>
<keyword id="KW-1185">Reference proteome</keyword>
<proteinExistence type="evidence at transcript level"/>
<reference key="1">
    <citation type="submission" date="2004-08" db="EMBL/GenBank/DDBJ databases">
        <authorList>
            <consortium name="NIH - Xenopus Gene Collection (XGC) project"/>
        </authorList>
    </citation>
    <scope>NUCLEOTIDE SEQUENCE [LARGE SCALE MRNA]</scope>
    <source>
        <tissue>Brain</tissue>
    </source>
</reference>
<feature type="chain" id="PRO_0000239018" description="Protein CMSS1">
    <location>
        <begin position="1"/>
        <end position="277"/>
    </location>
</feature>
<feature type="region of interest" description="Disordered" evidence="1">
    <location>
        <begin position="1"/>
        <end position="91"/>
    </location>
</feature>
<feature type="compositionally biased region" description="Acidic residues" evidence="1">
    <location>
        <begin position="1"/>
        <end position="14"/>
    </location>
</feature>
<feature type="compositionally biased region" description="Basic and acidic residues" evidence="1">
    <location>
        <begin position="24"/>
        <end position="34"/>
    </location>
</feature>
<feature type="compositionally biased region" description="Basic residues" evidence="1">
    <location>
        <begin position="35"/>
        <end position="52"/>
    </location>
</feature>
<feature type="compositionally biased region" description="Basic and acidic residues" evidence="1">
    <location>
        <begin position="53"/>
        <end position="66"/>
    </location>
</feature>
<accession>Q68EV5</accession>
<sequence length="277" mass="31594">MADDLGNEWWEEPAGDASNSEPAEEVKESEESKGNKKKKIPSGKTQVKRKKEVKVSQEAEKEDSAPKKKRRKKKTISDVLAQHAPTAGTPEDMQKLVLEHFENKRSVIELEELQIPDTCFVKENDLTHTLSSYLKEICPKWSKLSKNHKEKKSVLLLVVCSSAHRTLELIKLINAFKADTKVMKLFAKHIKIKDQINLLEKNVTHIGIGTPGRIKALIDQDGLSLESMKYLVFDWNWRDQKLRRMMDIPEVKKETLELLDSGLIRASRAGTLKIGLF</sequence>
<organism>
    <name type="scientific">Xenopus laevis</name>
    <name type="common">African clawed frog</name>
    <dbReference type="NCBI Taxonomy" id="8355"/>
    <lineage>
        <taxon>Eukaryota</taxon>
        <taxon>Metazoa</taxon>
        <taxon>Chordata</taxon>
        <taxon>Craniata</taxon>
        <taxon>Vertebrata</taxon>
        <taxon>Euteleostomi</taxon>
        <taxon>Amphibia</taxon>
        <taxon>Batrachia</taxon>
        <taxon>Anura</taxon>
        <taxon>Pipoidea</taxon>
        <taxon>Pipidae</taxon>
        <taxon>Xenopodinae</taxon>
        <taxon>Xenopus</taxon>
        <taxon>Xenopus</taxon>
    </lineage>
</organism>
<evidence type="ECO:0000256" key="1">
    <source>
        <dbReference type="SAM" id="MobiDB-lite"/>
    </source>
</evidence>
<evidence type="ECO:0000305" key="2"/>
<comment type="similarity">
    <text evidence="2">Belongs to the CMS1 family.</text>
</comment>
<name>CMS1_XENLA</name>
<protein>
    <recommendedName>
        <fullName>Protein CMSS1</fullName>
    </recommendedName>
    <alternativeName>
        <fullName>Cms1 ribosomal small subunit homolog</fullName>
    </alternativeName>
</protein>